<sequence length="281" mass="28786">MLLSGSSSQSLAAALAAATGERLGDVTYDSFPDGEQLVTVPPAVDGERAVIVASTPTSDAHIEVLQLQDAARDAGASEIITVLPYMGYARQDDAFDPGQPVSARAVARAISTGTDRVLTVNPHEDGVLECFDVPAAGVDAAPQLAAPLPADLTDPVFLSPDHGATDLATSVRDAYGTGVTDHFQKVRHSGSDVTVEPSEIQTAGRDVVVTDDIVATGTTMSEAITALDDPARVFVATVHPLLAGSARLKLARAGVEAVYGTDTIECAVSEVSAAPAIADAL</sequence>
<accession>Q9HN88</accession>
<evidence type="ECO:0000255" key="1">
    <source>
        <dbReference type="HAMAP-Rule" id="MF_00583"/>
    </source>
</evidence>
<gene>
    <name evidence="1" type="primary">prs</name>
    <name type="synonym">prsA</name>
    <name type="ordered locus">VNG_2203G</name>
</gene>
<protein>
    <recommendedName>
        <fullName evidence="1">Ribose-phosphate pyrophosphokinase</fullName>
        <shortName evidence="1">RPPK</shortName>
        <ecNumber evidence="1">2.7.6.1</ecNumber>
    </recommendedName>
    <alternativeName>
        <fullName evidence="1">5-phospho-D-ribosyl alpha-1-diphosphate synthase</fullName>
    </alternativeName>
    <alternativeName>
        <fullName evidence="1">Phosphoribosyl diphosphate synthase</fullName>
    </alternativeName>
    <alternativeName>
        <fullName evidence="1">Phosphoribosyl pyrophosphate synthase</fullName>
        <shortName evidence="1">P-Rib-PP synthase</shortName>
        <shortName evidence="1">PRPP synthase</shortName>
        <shortName evidence="1">PRPPase</shortName>
    </alternativeName>
</protein>
<proteinExistence type="inferred from homology"/>
<reference key="1">
    <citation type="journal article" date="2000" name="Proc. Natl. Acad. Sci. U.S.A.">
        <title>Genome sequence of Halobacterium species NRC-1.</title>
        <authorList>
            <person name="Ng W.V."/>
            <person name="Kennedy S.P."/>
            <person name="Mahairas G.G."/>
            <person name="Berquist B."/>
            <person name="Pan M."/>
            <person name="Shukla H.D."/>
            <person name="Lasky S.R."/>
            <person name="Baliga N.S."/>
            <person name="Thorsson V."/>
            <person name="Sbrogna J."/>
            <person name="Swartzell S."/>
            <person name="Weir D."/>
            <person name="Hall J."/>
            <person name="Dahl T.A."/>
            <person name="Welti R."/>
            <person name="Goo Y.A."/>
            <person name="Leithauser B."/>
            <person name="Keller K."/>
            <person name="Cruz R."/>
            <person name="Danson M.J."/>
            <person name="Hough D.W."/>
            <person name="Maddocks D.G."/>
            <person name="Jablonski P.E."/>
            <person name="Krebs M.P."/>
            <person name="Angevine C.M."/>
            <person name="Dale H."/>
            <person name="Isenbarger T.A."/>
            <person name="Peck R.F."/>
            <person name="Pohlschroder M."/>
            <person name="Spudich J.L."/>
            <person name="Jung K.-H."/>
            <person name="Alam M."/>
            <person name="Freitas T."/>
            <person name="Hou S."/>
            <person name="Daniels C.J."/>
            <person name="Dennis P.P."/>
            <person name="Omer A.D."/>
            <person name="Ebhardt H."/>
            <person name="Lowe T.M."/>
            <person name="Liang P."/>
            <person name="Riley M."/>
            <person name="Hood L."/>
            <person name="DasSarma S."/>
        </authorList>
    </citation>
    <scope>NUCLEOTIDE SEQUENCE [LARGE SCALE GENOMIC DNA]</scope>
    <source>
        <strain>ATCC 700922 / JCM 11081 / NRC-1</strain>
    </source>
</reference>
<keyword id="KW-0067">ATP-binding</keyword>
<keyword id="KW-0963">Cytoplasm</keyword>
<keyword id="KW-0418">Kinase</keyword>
<keyword id="KW-0460">Magnesium</keyword>
<keyword id="KW-0479">Metal-binding</keyword>
<keyword id="KW-0545">Nucleotide biosynthesis</keyword>
<keyword id="KW-0547">Nucleotide-binding</keyword>
<keyword id="KW-1185">Reference proteome</keyword>
<keyword id="KW-0808">Transferase</keyword>
<feature type="chain" id="PRO_0000141236" description="Ribose-phosphate pyrophosphokinase">
    <location>
        <begin position="1"/>
        <end position="281"/>
    </location>
</feature>
<feature type="active site" evidence="1">
    <location>
        <position position="185"/>
    </location>
</feature>
<feature type="binding site" evidence="1">
    <location>
        <begin position="33"/>
        <end position="35"/>
    </location>
    <ligand>
        <name>ATP</name>
        <dbReference type="ChEBI" id="CHEBI:30616"/>
    </ligand>
</feature>
<feature type="binding site" evidence="1">
    <location>
        <begin position="90"/>
        <end position="91"/>
    </location>
    <ligand>
        <name>ATP</name>
        <dbReference type="ChEBI" id="CHEBI:30616"/>
    </ligand>
</feature>
<feature type="binding site" evidence="1">
    <location>
        <position position="123"/>
    </location>
    <ligand>
        <name>Mg(2+)</name>
        <dbReference type="ChEBI" id="CHEBI:18420"/>
        <label>1</label>
    </ligand>
</feature>
<feature type="binding site" evidence="1">
    <location>
        <position position="161"/>
    </location>
    <ligand>
        <name>Mg(2+)</name>
        <dbReference type="ChEBI" id="CHEBI:18420"/>
        <label>2</label>
    </ligand>
</feature>
<feature type="binding site" evidence="1">
    <location>
        <position position="187"/>
    </location>
    <ligand>
        <name>D-ribose 5-phosphate</name>
        <dbReference type="ChEBI" id="CHEBI:78346"/>
    </ligand>
</feature>
<feature type="binding site" evidence="1">
    <location>
        <position position="211"/>
    </location>
    <ligand>
        <name>D-ribose 5-phosphate</name>
        <dbReference type="ChEBI" id="CHEBI:78346"/>
    </ligand>
</feature>
<organism>
    <name type="scientific">Halobacterium salinarum (strain ATCC 700922 / JCM 11081 / NRC-1)</name>
    <name type="common">Halobacterium halobium</name>
    <dbReference type="NCBI Taxonomy" id="64091"/>
    <lineage>
        <taxon>Archaea</taxon>
        <taxon>Methanobacteriati</taxon>
        <taxon>Methanobacteriota</taxon>
        <taxon>Stenosarchaea group</taxon>
        <taxon>Halobacteria</taxon>
        <taxon>Halobacteriales</taxon>
        <taxon>Halobacteriaceae</taxon>
        <taxon>Halobacterium</taxon>
        <taxon>Halobacterium salinarum NRC-34001</taxon>
    </lineage>
</organism>
<dbReference type="EC" id="2.7.6.1" evidence="1"/>
<dbReference type="EMBL" id="AE004437">
    <property type="protein sequence ID" value="AAG20333.1"/>
    <property type="molecule type" value="Genomic_DNA"/>
</dbReference>
<dbReference type="PIR" id="A84371">
    <property type="entry name" value="A84371"/>
</dbReference>
<dbReference type="RefSeq" id="WP_010903634.1">
    <property type="nucleotide sequence ID" value="NC_002607.1"/>
</dbReference>
<dbReference type="SMR" id="Q9HN88"/>
<dbReference type="FunCoup" id="Q9HN88">
    <property type="interactions" value="150"/>
</dbReference>
<dbReference type="STRING" id="64091.VNG_2203G"/>
<dbReference type="PaxDb" id="64091-VNG_2203G"/>
<dbReference type="KEGG" id="hal:VNG_2203G"/>
<dbReference type="PATRIC" id="fig|64091.14.peg.1693"/>
<dbReference type="HOGENOM" id="CLU_033546_2_2_2"/>
<dbReference type="InParanoid" id="Q9HN88"/>
<dbReference type="OrthoDB" id="371997at2157"/>
<dbReference type="PhylomeDB" id="Q9HN88"/>
<dbReference type="UniPathway" id="UPA00087">
    <property type="reaction ID" value="UER00172"/>
</dbReference>
<dbReference type="Proteomes" id="UP000000554">
    <property type="component" value="Chromosome"/>
</dbReference>
<dbReference type="GO" id="GO:0005737">
    <property type="term" value="C:cytoplasm"/>
    <property type="evidence" value="ECO:0000318"/>
    <property type="project" value="GO_Central"/>
</dbReference>
<dbReference type="GO" id="GO:0002189">
    <property type="term" value="C:ribose phosphate diphosphokinase complex"/>
    <property type="evidence" value="ECO:0000318"/>
    <property type="project" value="GO_Central"/>
</dbReference>
<dbReference type="GO" id="GO:0005524">
    <property type="term" value="F:ATP binding"/>
    <property type="evidence" value="ECO:0007669"/>
    <property type="project" value="UniProtKB-KW"/>
</dbReference>
<dbReference type="GO" id="GO:0016301">
    <property type="term" value="F:kinase activity"/>
    <property type="evidence" value="ECO:0007669"/>
    <property type="project" value="UniProtKB-KW"/>
</dbReference>
<dbReference type="GO" id="GO:0000287">
    <property type="term" value="F:magnesium ion binding"/>
    <property type="evidence" value="ECO:0007669"/>
    <property type="project" value="UniProtKB-UniRule"/>
</dbReference>
<dbReference type="GO" id="GO:0004749">
    <property type="term" value="F:ribose phosphate diphosphokinase activity"/>
    <property type="evidence" value="ECO:0000318"/>
    <property type="project" value="GO_Central"/>
</dbReference>
<dbReference type="GO" id="GO:0006015">
    <property type="term" value="P:5-phosphoribose 1-diphosphate biosynthetic process"/>
    <property type="evidence" value="ECO:0000318"/>
    <property type="project" value="GO_Central"/>
</dbReference>
<dbReference type="GO" id="GO:0006164">
    <property type="term" value="P:purine nucleotide biosynthetic process"/>
    <property type="evidence" value="ECO:0000318"/>
    <property type="project" value="GO_Central"/>
</dbReference>
<dbReference type="CDD" id="cd06223">
    <property type="entry name" value="PRTases_typeI"/>
    <property type="match status" value="1"/>
</dbReference>
<dbReference type="FunFam" id="3.40.50.2020:FF:000007">
    <property type="entry name" value="Ribose-phosphate pyrophosphokinase"/>
    <property type="match status" value="1"/>
</dbReference>
<dbReference type="Gene3D" id="3.40.50.2020">
    <property type="match status" value="2"/>
</dbReference>
<dbReference type="HAMAP" id="MF_00583_A">
    <property type="entry name" value="RibP_PPkinase_A"/>
    <property type="match status" value="1"/>
</dbReference>
<dbReference type="InterPro" id="IPR029099">
    <property type="entry name" value="Pribosyltran_N"/>
</dbReference>
<dbReference type="InterPro" id="IPR000836">
    <property type="entry name" value="PRibTrfase_dom"/>
</dbReference>
<dbReference type="InterPro" id="IPR029057">
    <property type="entry name" value="PRTase-like"/>
</dbReference>
<dbReference type="InterPro" id="IPR005946">
    <property type="entry name" value="Rib-P_diPkinase"/>
</dbReference>
<dbReference type="InterPro" id="IPR037514">
    <property type="entry name" value="Rib-P_diPkinase_arc"/>
</dbReference>
<dbReference type="NCBIfam" id="TIGR01251">
    <property type="entry name" value="ribP_PPkin"/>
    <property type="match status" value="1"/>
</dbReference>
<dbReference type="PANTHER" id="PTHR10210">
    <property type="entry name" value="RIBOSE-PHOSPHATE DIPHOSPHOKINASE FAMILY MEMBER"/>
    <property type="match status" value="1"/>
</dbReference>
<dbReference type="PANTHER" id="PTHR10210:SF32">
    <property type="entry name" value="RIBOSE-PHOSPHATE PYROPHOSPHOKINASE 2"/>
    <property type="match status" value="1"/>
</dbReference>
<dbReference type="Pfam" id="PF00156">
    <property type="entry name" value="Pribosyltran"/>
    <property type="match status" value="1"/>
</dbReference>
<dbReference type="Pfam" id="PF13793">
    <property type="entry name" value="Pribosyltran_N"/>
    <property type="match status" value="1"/>
</dbReference>
<dbReference type="SMART" id="SM01400">
    <property type="entry name" value="Pribosyltran_N"/>
    <property type="match status" value="1"/>
</dbReference>
<dbReference type="SUPFAM" id="SSF53271">
    <property type="entry name" value="PRTase-like"/>
    <property type="match status" value="2"/>
</dbReference>
<comment type="function">
    <text evidence="1">Involved in the biosynthesis of the central metabolite phospho-alpha-D-ribosyl-1-pyrophosphate (PRPP) via the transfer of pyrophosphoryl group from ATP to 1-hydroxyl of ribose-5-phosphate (Rib-5-P).</text>
</comment>
<comment type="catalytic activity">
    <reaction evidence="1">
        <text>D-ribose 5-phosphate + ATP = 5-phospho-alpha-D-ribose 1-diphosphate + AMP + H(+)</text>
        <dbReference type="Rhea" id="RHEA:15609"/>
        <dbReference type="ChEBI" id="CHEBI:15378"/>
        <dbReference type="ChEBI" id="CHEBI:30616"/>
        <dbReference type="ChEBI" id="CHEBI:58017"/>
        <dbReference type="ChEBI" id="CHEBI:78346"/>
        <dbReference type="ChEBI" id="CHEBI:456215"/>
        <dbReference type="EC" id="2.7.6.1"/>
    </reaction>
</comment>
<comment type="cofactor">
    <cofactor evidence="1">
        <name>Mg(2+)</name>
        <dbReference type="ChEBI" id="CHEBI:18420"/>
    </cofactor>
    <text evidence="1">Binds 2 Mg(2+) ions per subunit.</text>
</comment>
<comment type="pathway">
    <text evidence="1">Metabolic intermediate biosynthesis; 5-phospho-alpha-D-ribose 1-diphosphate biosynthesis; 5-phospho-alpha-D-ribose 1-diphosphate from D-ribose 5-phosphate (route I): step 1/1.</text>
</comment>
<comment type="subcellular location">
    <subcellularLocation>
        <location evidence="1">Cytoplasm</location>
    </subcellularLocation>
</comment>
<comment type="similarity">
    <text evidence="1">Belongs to the ribose-phosphate pyrophosphokinase family. Class III (archaeal) subfamily.</text>
</comment>
<name>KPRS_HALSA</name>